<accession>P22836</accession>
<name>RL34_PROMI</name>
<protein>
    <recommendedName>
        <fullName evidence="2">Large ribosomal subunit protein bL34</fullName>
    </recommendedName>
    <alternativeName>
        <fullName>50S ribosomal protein L34</fullName>
    </alternativeName>
</protein>
<gene>
    <name type="primary">rpmH</name>
</gene>
<keyword id="KW-0687">Ribonucleoprotein</keyword>
<keyword id="KW-0689">Ribosomal protein</keyword>
<reference key="1">
    <citation type="journal article" date="1990" name="Gene">
        <title>Nucleotide sequence of a Proteus mirabilis DNA fragment homologous to the 60K-rnpA-rpmH-dnaA-dnaN-recF-gyrB region of Escherichia coli.</title>
        <authorList>
            <person name="Skovgaard O."/>
        </authorList>
    </citation>
    <scope>NUCLEOTIDE SEQUENCE [GENOMIC DNA]</scope>
    <source>
        <strain>LM1509</strain>
    </source>
</reference>
<comment type="similarity">
    <text evidence="2">Belongs to the bacterial ribosomal protein bL34 family.</text>
</comment>
<organism>
    <name type="scientific">Proteus mirabilis</name>
    <dbReference type="NCBI Taxonomy" id="584"/>
    <lineage>
        <taxon>Bacteria</taxon>
        <taxon>Pseudomonadati</taxon>
        <taxon>Pseudomonadota</taxon>
        <taxon>Gammaproteobacteria</taxon>
        <taxon>Enterobacterales</taxon>
        <taxon>Morganellaceae</taxon>
        <taxon>Proteus</taxon>
    </lineage>
</organism>
<proteinExistence type="inferred from homology"/>
<feature type="chain" id="PRO_0000187438" description="Large ribosomal subunit protein bL34">
    <location>
        <begin position="1"/>
        <end position="47"/>
    </location>
</feature>
<feature type="region of interest" description="Disordered" evidence="1">
    <location>
        <begin position="28"/>
        <end position="47"/>
    </location>
</feature>
<feature type="compositionally biased region" description="Basic residues" evidence="1">
    <location>
        <begin position="31"/>
        <end position="40"/>
    </location>
</feature>
<dbReference type="EMBL" id="M58352">
    <property type="protein sequence ID" value="AAA83957.1"/>
    <property type="molecule type" value="Genomic_DNA"/>
</dbReference>
<dbReference type="PIR" id="JQ0732">
    <property type="entry name" value="JQ0732"/>
</dbReference>
<dbReference type="RefSeq" id="WP_004246509.1">
    <property type="nucleotide sequence ID" value="NZ_WURR01000008.1"/>
</dbReference>
<dbReference type="SMR" id="P22836"/>
<dbReference type="STRING" id="584.AOUC001_19000"/>
<dbReference type="GeneID" id="84584035"/>
<dbReference type="OrthoDB" id="9804164at2"/>
<dbReference type="GO" id="GO:1990904">
    <property type="term" value="C:ribonucleoprotein complex"/>
    <property type="evidence" value="ECO:0007669"/>
    <property type="project" value="UniProtKB-KW"/>
</dbReference>
<dbReference type="GO" id="GO:0005840">
    <property type="term" value="C:ribosome"/>
    <property type="evidence" value="ECO:0007669"/>
    <property type="project" value="UniProtKB-KW"/>
</dbReference>
<dbReference type="GO" id="GO:0003735">
    <property type="term" value="F:structural constituent of ribosome"/>
    <property type="evidence" value="ECO:0007669"/>
    <property type="project" value="InterPro"/>
</dbReference>
<dbReference type="GO" id="GO:0006412">
    <property type="term" value="P:translation"/>
    <property type="evidence" value="ECO:0007669"/>
    <property type="project" value="UniProtKB-UniRule"/>
</dbReference>
<dbReference type="FunFam" id="1.10.287.3980:FF:000001">
    <property type="entry name" value="Mitochondrial ribosomal protein L34"/>
    <property type="match status" value="1"/>
</dbReference>
<dbReference type="Gene3D" id="1.10.287.3980">
    <property type="match status" value="1"/>
</dbReference>
<dbReference type="HAMAP" id="MF_00391">
    <property type="entry name" value="Ribosomal_bL34"/>
    <property type="match status" value="1"/>
</dbReference>
<dbReference type="InterPro" id="IPR000271">
    <property type="entry name" value="Ribosomal_bL34"/>
</dbReference>
<dbReference type="InterPro" id="IPR020939">
    <property type="entry name" value="Ribosomal_bL34_CS"/>
</dbReference>
<dbReference type="NCBIfam" id="TIGR01030">
    <property type="entry name" value="rpmH_bact"/>
    <property type="match status" value="1"/>
</dbReference>
<dbReference type="PANTHER" id="PTHR14503:SF4">
    <property type="entry name" value="LARGE RIBOSOMAL SUBUNIT PROTEIN BL34M"/>
    <property type="match status" value="1"/>
</dbReference>
<dbReference type="PANTHER" id="PTHR14503">
    <property type="entry name" value="MITOCHONDRIAL RIBOSOMAL PROTEIN 34 FAMILY MEMBER"/>
    <property type="match status" value="1"/>
</dbReference>
<dbReference type="Pfam" id="PF00468">
    <property type="entry name" value="Ribosomal_L34"/>
    <property type="match status" value="1"/>
</dbReference>
<dbReference type="PROSITE" id="PS00784">
    <property type="entry name" value="RIBOSOMAL_L34"/>
    <property type="match status" value="1"/>
</dbReference>
<sequence>MKRTFQPSVLKRNRNHGFRARMATKNGRQVLARRRAKGRARLTVSSK</sequence>
<evidence type="ECO:0000256" key="1">
    <source>
        <dbReference type="SAM" id="MobiDB-lite"/>
    </source>
</evidence>
<evidence type="ECO:0000305" key="2"/>